<feature type="chain" id="PRO_1000119080" description="3-dehydroquinate synthase">
    <location>
        <begin position="1"/>
        <end position="362"/>
    </location>
</feature>
<feature type="binding site" evidence="1">
    <location>
        <begin position="71"/>
        <end position="76"/>
    </location>
    <ligand>
        <name>NAD(+)</name>
        <dbReference type="ChEBI" id="CHEBI:57540"/>
    </ligand>
</feature>
<feature type="binding site" evidence="1">
    <location>
        <begin position="105"/>
        <end position="109"/>
    </location>
    <ligand>
        <name>NAD(+)</name>
        <dbReference type="ChEBI" id="CHEBI:57540"/>
    </ligand>
</feature>
<feature type="binding site" evidence="1">
    <location>
        <begin position="129"/>
        <end position="130"/>
    </location>
    <ligand>
        <name>NAD(+)</name>
        <dbReference type="ChEBI" id="CHEBI:57540"/>
    </ligand>
</feature>
<feature type="binding site" evidence="1">
    <location>
        <position position="142"/>
    </location>
    <ligand>
        <name>NAD(+)</name>
        <dbReference type="ChEBI" id="CHEBI:57540"/>
    </ligand>
</feature>
<feature type="binding site" evidence="1">
    <location>
        <position position="151"/>
    </location>
    <ligand>
        <name>NAD(+)</name>
        <dbReference type="ChEBI" id="CHEBI:57540"/>
    </ligand>
</feature>
<feature type="binding site" evidence="1">
    <location>
        <begin position="169"/>
        <end position="172"/>
    </location>
    <ligand>
        <name>NAD(+)</name>
        <dbReference type="ChEBI" id="CHEBI:57540"/>
    </ligand>
</feature>
<feature type="binding site" evidence="1">
    <location>
        <position position="184"/>
    </location>
    <ligand>
        <name>Zn(2+)</name>
        <dbReference type="ChEBI" id="CHEBI:29105"/>
    </ligand>
</feature>
<feature type="binding site" evidence="1">
    <location>
        <position position="247"/>
    </location>
    <ligand>
        <name>Zn(2+)</name>
        <dbReference type="ChEBI" id="CHEBI:29105"/>
    </ligand>
</feature>
<feature type="binding site" evidence="1">
    <location>
        <position position="264"/>
    </location>
    <ligand>
        <name>Zn(2+)</name>
        <dbReference type="ChEBI" id="CHEBI:29105"/>
    </ligand>
</feature>
<gene>
    <name evidence="1" type="primary">aroB</name>
    <name type="ordered locus">E2348C_3633</name>
</gene>
<organism>
    <name type="scientific">Escherichia coli O127:H6 (strain E2348/69 / EPEC)</name>
    <dbReference type="NCBI Taxonomy" id="574521"/>
    <lineage>
        <taxon>Bacteria</taxon>
        <taxon>Pseudomonadati</taxon>
        <taxon>Pseudomonadota</taxon>
        <taxon>Gammaproteobacteria</taxon>
        <taxon>Enterobacterales</taxon>
        <taxon>Enterobacteriaceae</taxon>
        <taxon>Escherichia</taxon>
    </lineage>
</organism>
<evidence type="ECO:0000255" key="1">
    <source>
        <dbReference type="HAMAP-Rule" id="MF_00110"/>
    </source>
</evidence>
<name>AROB_ECO27</name>
<comment type="function">
    <text evidence="1">Catalyzes the conversion of 3-deoxy-D-arabino-heptulosonate 7-phosphate (DAHP) to dehydroquinate (DHQ).</text>
</comment>
<comment type="catalytic activity">
    <reaction evidence="1">
        <text>7-phospho-2-dehydro-3-deoxy-D-arabino-heptonate = 3-dehydroquinate + phosphate</text>
        <dbReference type="Rhea" id="RHEA:21968"/>
        <dbReference type="ChEBI" id="CHEBI:32364"/>
        <dbReference type="ChEBI" id="CHEBI:43474"/>
        <dbReference type="ChEBI" id="CHEBI:58394"/>
        <dbReference type="EC" id="4.2.3.4"/>
    </reaction>
</comment>
<comment type="cofactor">
    <cofactor evidence="1">
        <name>Co(2+)</name>
        <dbReference type="ChEBI" id="CHEBI:48828"/>
    </cofactor>
    <cofactor evidence="1">
        <name>Zn(2+)</name>
        <dbReference type="ChEBI" id="CHEBI:29105"/>
    </cofactor>
    <text evidence="1">Binds 1 divalent metal cation per subunit. Can use either Co(2+) or Zn(2+).</text>
</comment>
<comment type="cofactor">
    <cofactor evidence="1">
        <name>NAD(+)</name>
        <dbReference type="ChEBI" id="CHEBI:57540"/>
    </cofactor>
</comment>
<comment type="pathway">
    <text evidence="1">Metabolic intermediate biosynthesis; chorismate biosynthesis; chorismate from D-erythrose 4-phosphate and phosphoenolpyruvate: step 2/7.</text>
</comment>
<comment type="subcellular location">
    <subcellularLocation>
        <location evidence="1">Cytoplasm</location>
    </subcellularLocation>
</comment>
<comment type="similarity">
    <text evidence="1">Belongs to the sugar phosphate cyclases superfamily. Dehydroquinate synthase family.</text>
</comment>
<proteinExistence type="inferred from homology"/>
<accession>B7UK94</accession>
<dbReference type="EC" id="4.2.3.4" evidence="1"/>
<dbReference type="EMBL" id="FM180568">
    <property type="protein sequence ID" value="CAS11181.1"/>
    <property type="molecule type" value="Genomic_DNA"/>
</dbReference>
<dbReference type="RefSeq" id="WP_000439850.1">
    <property type="nucleotide sequence ID" value="NC_011601.1"/>
</dbReference>
<dbReference type="SMR" id="B7UK94"/>
<dbReference type="KEGG" id="ecg:E2348C_3633"/>
<dbReference type="HOGENOM" id="CLU_001201_0_2_6"/>
<dbReference type="UniPathway" id="UPA00053">
    <property type="reaction ID" value="UER00085"/>
</dbReference>
<dbReference type="Proteomes" id="UP000008205">
    <property type="component" value="Chromosome"/>
</dbReference>
<dbReference type="GO" id="GO:0005737">
    <property type="term" value="C:cytoplasm"/>
    <property type="evidence" value="ECO:0007669"/>
    <property type="project" value="UniProtKB-SubCell"/>
</dbReference>
<dbReference type="GO" id="GO:0003856">
    <property type="term" value="F:3-dehydroquinate synthase activity"/>
    <property type="evidence" value="ECO:0007669"/>
    <property type="project" value="UniProtKB-UniRule"/>
</dbReference>
<dbReference type="GO" id="GO:0046872">
    <property type="term" value="F:metal ion binding"/>
    <property type="evidence" value="ECO:0007669"/>
    <property type="project" value="UniProtKB-KW"/>
</dbReference>
<dbReference type="GO" id="GO:0000166">
    <property type="term" value="F:nucleotide binding"/>
    <property type="evidence" value="ECO:0007669"/>
    <property type="project" value="UniProtKB-KW"/>
</dbReference>
<dbReference type="GO" id="GO:0008652">
    <property type="term" value="P:amino acid biosynthetic process"/>
    <property type="evidence" value="ECO:0007669"/>
    <property type="project" value="UniProtKB-KW"/>
</dbReference>
<dbReference type="GO" id="GO:0009073">
    <property type="term" value="P:aromatic amino acid family biosynthetic process"/>
    <property type="evidence" value="ECO:0007669"/>
    <property type="project" value="UniProtKB-KW"/>
</dbReference>
<dbReference type="GO" id="GO:0009423">
    <property type="term" value="P:chorismate biosynthetic process"/>
    <property type="evidence" value="ECO:0007669"/>
    <property type="project" value="UniProtKB-UniRule"/>
</dbReference>
<dbReference type="CDD" id="cd08195">
    <property type="entry name" value="DHQS"/>
    <property type="match status" value="1"/>
</dbReference>
<dbReference type="FunFam" id="1.20.1090.10:FF:000002">
    <property type="entry name" value="3-dehydroquinate synthase"/>
    <property type="match status" value="1"/>
</dbReference>
<dbReference type="FunFam" id="3.40.50.1970:FF:000001">
    <property type="entry name" value="3-dehydroquinate synthase"/>
    <property type="match status" value="1"/>
</dbReference>
<dbReference type="Gene3D" id="3.40.50.1970">
    <property type="match status" value="1"/>
</dbReference>
<dbReference type="Gene3D" id="1.20.1090.10">
    <property type="entry name" value="Dehydroquinate synthase-like - alpha domain"/>
    <property type="match status" value="1"/>
</dbReference>
<dbReference type="HAMAP" id="MF_00110">
    <property type="entry name" value="DHQ_synthase"/>
    <property type="match status" value="1"/>
</dbReference>
<dbReference type="InterPro" id="IPR050071">
    <property type="entry name" value="Dehydroquinate_synthase"/>
</dbReference>
<dbReference type="InterPro" id="IPR016037">
    <property type="entry name" value="DHQ_synth_AroB"/>
</dbReference>
<dbReference type="InterPro" id="IPR030963">
    <property type="entry name" value="DHQ_synth_fam"/>
</dbReference>
<dbReference type="InterPro" id="IPR030960">
    <property type="entry name" value="DHQS/DOIS_N"/>
</dbReference>
<dbReference type="InterPro" id="IPR056179">
    <property type="entry name" value="DHQS_C"/>
</dbReference>
<dbReference type="NCBIfam" id="TIGR01357">
    <property type="entry name" value="aroB"/>
    <property type="match status" value="1"/>
</dbReference>
<dbReference type="PANTHER" id="PTHR43622">
    <property type="entry name" value="3-DEHYDROQUINATE SYNTHASE"/>
    <property type="match status" value="1"/>
</dbReference>
<dbReference type="PANTHER" id="PTHR43622:SF7">
    <property type="entry name" value="3-DEHYDROQUINATE SYNTHASE, CHLOROPLASTIC"/>
    <property type="match status" value="1"/>
</dbReference>
<dbReference type="Pfam" id="PF01761">
    <property type="entry name" value="DHQ_synthase"/>
    <property type="match status" value="1"/>
</dbReference>
<dbReference type="Pfam" id="PF24621">
    <property type="entry name" value="DHQS_C"/>
    <property type="match status" value="1"/>
</dbReference>
<dbReference type="PIRSF" id="PIRSF001455">
    <property type="entry name" value="DHQ_synth"/>
    <property type="match status" value="1"/>
</dbReference>
<dbReference type="SUPFAM" id="SSF56796">
    <property type="entry name" value="Dehydroquinate synthase-like"/>
    <property type="match status" value="1"/>
</dbReference>
<protein>
    <recommendedName>
        <fullName evidence="1">3-dehydroquinate synthase</fullName>
        <shortName evidence="1">DHQS</shortName>
        <ecNumber evidence="1">4.2.3.4</ecNumber>
    </recommendedName>
</protein>
<sequence>MERIVVTLGERSYPITIASGLFNEPASFLPLKSGEQVMLVTNETLAPLYLDKVRGVLEQAGVNVDSVILPDGEQYKSLAVLDTVFTALLQKPHGRDTTLVALGGGVVGDLTGFAAASYQRGVRFIQVPTTLLSQVDSSVGGKTAVNHPLGKNMIGAFYQPASVVVDLDCLKTLPPRELASGLAEVIKYGIILDGAFFNWLEENLDALLRLDGPAMAYCIRRCCELKAEVVAADERETGLRALLNLGHTFGHAIEAEMGYGNWLHGEAVAAGMVMAARTSERLGQFSSAETQRIITLLTRAGLPVNGPREMSAQAYLPHMLRDKKVLAGEMRLILPLAIGKSEVRSGVSHELVLNAIADCQSA</sequence>
<reference key="1">
    <citation type="journal article" date="2009" name="J. Bacteriol.">
        <title>Complete genome sequence and comparative genome analysis of enteropathogenic Escherichia coli O127:H6 strain E2348/69.</title>
        <authorList>
            <person name="Iguchi A."/>
            <person name="Thomson N.R."/>
            <person name="Ogura Y."/>
            <person name="Saunders D."/>
            <person name="Ooka T."/>
            <person name="Henderson I.R."/>
            <person name="Harris D."/>
            <person name="Asadulghani M."/>
            <person name="Kurokawa K."/>
            <person name="Dean P."/>
            <person name="Kenny B."/>
            <person name="Quail M.A."/>
            <person name="Thurston S."/>
            <person name="Dougan G."/>
            <person name="Hayashi T."/>
            <person name="Parkhill J."/>
            <person name="Frankel G."/>
        </authorList>
    </citation>
    <scope>NUCLEOTIDE SEQUENCE [LARGE SCALE GENOMIC DNA]</scope>
    <source>
        <strain>E2348/69 / EPEC</strain>
    </source>
</reference>
<keyword id="KW-0028">Amino-acid biosynthesis</keyword>
<keyword id="KW-0057">Aromatic amino acid biosynthesis</keyword>
<keyword id="KW-0170">Cobalt</keyword>
<keyword id="KW-0963">Cytoplasm</keyword>
<keyword id="KW-0456">Lyase</keyword>
<keyword id="KW-0479">Metal-binding</keyword>
<keyword id="KW-0520">NAD</keyword>
<keyword id="KW-0547">Nucleotide-binding</keyword>
<keyword id="KW-1185">Reference proteome</keyword>
<keyword id="KW-0862">Zinc</keyword>